<evidence type="ECO:0000255" key="1">
    <source>
        <dbReference type="PROSITE-ProRule" id="PRU10041"/>
    </source>
</evidence>
<evidence type="ECO:0000305" key="2"/>
<evidence type="ECO:0007829" key="3">
    <source>
        <dbReference type="PDB" id="2EGJ"/>
    </source>
</evidence>
<accession>O67466</accession>
<keyword id="KW-0002">3D-structure</keyword>
<keyword id="KW-0378">Hydrolase</keyword>
<keyword id="KW-1185">Reference proteome</keyword>
<organism>
    <name type="scientific">Aquifex aeolicus (strain VF5)</name>
    <dbReference type="NCBI Taxonomy" id="224324"/>
    <lineage>
        <taxon>Bacteria</taxon>
        <taxon>Pseudomonadati</taxon>
        <taxon>Aquificota</taxon>
        <taxon>Aquificia</taxon>
        <taxon>Aquificales</taxon>
        <taxon>Aquificaceae</taxon>
        <taxon>Aquifex</taxon>
    </lineage>
</organism>
<feature type="chain" id="PRO_0000087761" description="Putative esterase aq_1494">
    <location>
        <begin position="1"/>
        <end position="128"/>
    </location>
</feature>
<feature type="active site" evidence="1">
    <location>
        <position position="15"/>
    </location>
</feature>
<feature type="strand" evidence="3">
    <location>
        <begin position="3"/>
        <end position="8"/>
    </location>
</feature>
<feature type="helix" evidence="3">
    <location>
        <begin position="11"/>
        <end position="13"/>
    </location>
</feature>
<feature type="strand" evidence="3">
    <location>
        <begin position="18"/>
        <end position="20"/>
    </location>
</feature>
<feature type="helix" evidence="3">
    <location>
        <begin position="23"/>
        <end position="39"/>
    </location>
</feature>
<feature type="helix" evidence="3">
    <location>
        <begin position="44"/>
        <end position="49"/>
    </location>
</feature>
<feature type="strand" evidence="3">
    <location>
        <begin position="52"/>
        <end position="63"/>
    </location>
</feature>
<feature type="strand" evidence="3">
    <location>
        <begin position="72"/>
        <end position="82"/>
    </location>
</feature>
<feature type="strand" evidence="3">
    <location>
        <begin position="84"/>
        <end position="95"/>
    </location>
</feature>
<feature type="strand" evidence="3">
    <location>
        <begin position="98"/>
        <end position="111"/>
    </location>
</feature>
<feature type="helix" evidence="3">
    <location>
        <begin position="120"/>
        <end position="126"/>
    </location>
</feature>
<gene>
    <name type="ordered locus">aq_1494</name>
</gene>
<protein>
    <recommendedName>
        <fullName>Putative esterase aq_1494</fullName>
        <ecNumber>3.1.-.-</ecNumber>
    </recommendedName>
</protein>
<sequence length="128" mass="15286">MPFIYRRRVQFYETDAQGIVHHSNYFRYFEEARGEFLRSKGFPYSKMRDMGLEVVLLNAYCEYKKPLFYDDVFEVHLNLEELSRFTFTFSYIVFKEDIAVAKANTKHCMVKNGKIVSIPKEVLEVLKD</sequence>
<name>Y1494_AQUAE</name>
<reference key="1">
    <citation type="journal article" date="1998" name="Nature">
        <title>The complete genome of the hyperthermophilic bacterium Aquifex aeolicus.</title>
        <authorList>
            <person name="Deckert G."/>
            <person name="Warren P.V."/>
            <person name="Gaasterland T."/>
            <person name="Young W.G."/>
            <person name="Lenox A.L."/>
            <person name="Graham D.E."/>
            <person name="Overbeek R."/>
            <person name="Snead M.A."/>
            <person name="Keller M."/>
            <person name="Aujay M."/>
            <person name="Huber R."/>
            <person name="Feldman R.A."/>
            <person name="Short J.M."/>
            <person name="Olsen G.J."/>
            <person name="Swanson R.V."/>
        </authorList>
    </citation>
    <scope>NUCLEOTIDE SEQUENCE [LARGE SCALE GENOMIC DNA]</scope>
    <source>
        <strain>VF5</strain>
    </source>
</reference>
<reference key="2">
    <citation type="submission" date="2007-09" db="PDB data bank">
        <title>Crystal structure of hypothetical protein (aq_1494) from Aquifex aeolicus.</title>
        <authorList>
            <consortium name="RIKEN structural genomics initiative (RSGI)"/>
        </authorList>
    </citation>
    <scope>X-RAY CRYSTALLOGRAPHY (1.8 ANGSTROMS)</scope>
</reference>
<comment type="similarity">
    <text evidence="2">Belongs to the 4-hydroxybenzoyl-CoA thioesterase family.</text>
</comment>
<proteinExistence type="evidence at protein level"/>
<dbReference type="EC" id="3.1.-.-"/>
<dbReference type="EMBL" id="AE000657">
    <property type="protein sequence ID" value="AAC07441.1"/>
    <property type="molecule type" value="Genomic_DNA"/>
</dbReference>
<dbReference type="PIR" id="H70429">
    <property type="entry name" value="H70429"/>
</dbReference>
<dbReference type="RefSeq" id="NP_214031.1">
    <property type="nucleotide sequence ID" value="NC_000918.1"/>
</dbReference>
<dbReference type="RefSeq" id="WP_010880969.1">
    <property type="nucleotide sequence ID" value="NC_000918.1"/>
</dbReference>
<dbReference type="PDB" id="2EGI">
    <property type="method" value="X-ray"/>
    <property type="resolution" value="2.30 A"/>
    <property type="chains" value="A/C/D/E/F/G/H/I=1-128"/>
</dbReference>
<dbReference type="PDB" id="2EGJ">
    <property type="method" value="X-ray"/>
    <property type="resolution" value="1.80 A"/>
    <property type="chains" value="A/B=1-128"/>
</dbReference>
<dbReference type="PDB" id="2EGR">
    <property type="method" value="X-ray"/>
    <property type="resolution" value="1.80 A"/>
    <property type="chains" value="A/B=1-128"/>
</dbReference>
<dbReference type="PDBsum" id="2EGI"/>
<dbReference type="PDBsum" id="2EGJ"/>
<dbReference type="PDBsum" id="2EGR"/>
<dbReference type="SMR" id="O67466"/>
<dbReference type="FunCoup" id="O67466">
    <property type="interactions" value="163"/>
</dbReference>
<dbReference type="STRING" id="224324.aq_1494"/>
<dbReference type="EnsemblBacteria" id="AAC07441">
    <property type="protein sequence ID" value="AAC07441"/>
    <property type="gene ID" value="aq_1494"/>
</dbReference>
<dbReference type="KEGG" id="aae:aq_1494"/>
<dbReference type="PATRIC" id="fig|224324.8.peg.1164"/>
<dbReference type="eggNOG" id="COG0824">
    <property type="taxonomic scope" value="Bacteria"/>
</dbReference>
<dbReference type="HOGENOM" id="CLU_101141_3_2_0"/>
<dbReference type="InParanoid" id="O67466"/>
<dbReference type="OrthoDB" id="9800856at2"/>
<dbReference type="EvolutionaryTrace" id="O67466"/>
<dbReference type="Proteomes" id="UP000000798">
    <property type="component" value="Chromosome"/>
</dbReference>
<dbReference type="GO" id="GO:0047617">
    <property type="term" value="F:fatty acyl-CoA hydrolase activity"/>
    <property type="evidence" value="ECO:0000318"/>
    <property type="project" value="GO_Central"/>
</dbReference>
<dbReference type="CDD" id="cd00586">
    <property type="entry name" value="4HBT"/>
    <property type="match status" value="1"/>
</dbReference>
<dbReference type="FunFam" id="3.10.129.10:FF:000250">
    <property type="entry name" value="Putative esterase aq_1494"/>
    <property type="match status" value="1"/>
</dbReference>
<dbReference type="Gene3D" id="3.10.129.10">
    <property type="entry name" value="Hotdog Thioesterase"/>
    <property type="match status" value="1"/>
</dbReference>
<dbReference type="InterPro" id="IPR050563">
    <property type="entry name" value="4-hydroxybenzoyl-CoA_TE"/>
</dbReference>
<dbReference type="InterPro" id="IPR008272">
    <property type="entry name" value="HB-CoA_thioesterase_AS"/>
</dbReference>
<dbReference type="InterPro" id="IPR029069">
    <property type="entry name" value="HotDog_dom_sf"/>
</dbReference>
<dbReference type="InterPro" id="IPR006684">
    <property type="entry name" value="YbgC/YbaW"/>
</dbReference>
<dbReference type="NCBIfam" id="TIGR00051">
    <property type="entry name" value="YbgC/FadM family acyl-CoA thioesterase"/>
    <property type="match status" value="1"/>
</dbReference>
<dbReference type="PANTHER" id="PTHR31793">
    <property type="entry name" value="4-HYDROXYBENZOYL-COA THIOESTERASE FAMILY MEMBER"/>
    <property type="match status" value="1"/>
</dbReference>
<dbReference type="PANTHER" id="PTHR31793:SF27">
    <property type="entry name" value="NOVEL THIOESTERASE SUPERFAMILY DOMAIN AND SAPOSIN A-TYPE DOMAIN CONTAINING PROTEIN (0610012H03RIK)"/>
    <property type="match status" value="1"/>
</dbReference>
<dbReference type="Pfam" id="PF13279">
    <property type="entry name" value="4HBT_2"/>
    <property type="match status" value="1"/>
</dbReference>
<dbReference type="PIRSF" id="PIRSF003230">
    <property type="entry name" value="YbgC"/>
    <property type="match status" value="1"/>
</dbReference>
<dbReference type="SUPFAM" id="SSF54637">
    <property type="entry name" value="Thioesterase/thiol ester dehydrase-isomerase"/>
    <property type="match status" value="1"/>
</dbReference>
<dbReference type="PROSITE" id="PS01328">
    <property type="entry name" value="4HBCOA_THIOESTERASE"/>
    <property type="match status" value="1"/>
</dbReference>